<organism>
    <name type="scientific">Bacillus thuringiensis (strain Al Hakam)</name>
    <dbReference type="NCBI Taxonomy" id="412694"/>
    <lineage>
        <taxon>Bacteria</taxon>
        <taxon>Bacillati</taxon>
        <taxon>Bacillota</taxon>
        <taxon>Bacilli</taxon>
        <taxon>Bacillales</taxon>
        <taxon>Bacillaceae</taxon>
        <taxon>Bacillus</taxon>
        <taxon>Bacillus cereus group</taxon>
    </lineage>
</organism>
<feature type="chain" id="PRO_0000323073" description="Small ribosomal subunit protein uS5">
    <location>
        <begin position="1"/>
        <end position="167"/>
    </location>
</feature>
<feature type="domain" description="S5 DRBM" evidence="1">
    <location>
        <begin position="12"/>
        <end position="75"/>
    </location>
</feature>
<reference key="1">
    <citation type="journal article" date="2007" name="J. Bacteriol.">
        <title>The complete genome sequence of Bacillus thuringiensis Al Hakam.</title>
        <authorList>
            <person name="Challacombe J.F."/>
            <person name="Altherr M.R."/>
            <person name="Xie G."/>
            <person name="Bhotika S.S."/>
            <person name="Brown N."/>
            <person name="Bruce D."/>
            <person name="Campbell C.S."/>
            <person name="Campbell M.L."/>
            <person name="Chen J."/>
            <person name="Chertkov O."/>
            <person name="Cleland C."/>
            <person name="Dimitrijevic M."/>
            <person name="Doggett N.A."/>
            <person name="Fawcett J.J."/>
            <person name="Glavina T."/>
            <person name="Goodwin L.A."/>
            <person name="Green L.D."/>
            <person name="Han C.S."/>
            <person name="Hill K.K."/>
            <person name="Hitchcock P."/>
            <person name="Jackson P.J."/>
            <person name="Keim P."/>
            <person name="Kewalramani A.R."/>
            <person name="Longmire J."/>
            <person name="Lucas S."/>
            <person name="Malfatti S."/>
            <person name="Martinez D."/>
            <person name="McMurry K."/>
            <person name="Meincke L.J."/>
            <person name="Misra M."/>
            <person name="Moseman B.L."/>
            <person name="Mundt M."/>
            <person name="Munk A.C."/>
            <person name="Okinaka R.T."/>
            <person name="Parson-Quintana B."/>
            <person name="Reilly L.P."/>
            <person name="Richardson P."/>
            <person name="Robinson D.L."/>
            <person name="Saunders E."/>
            <person name="Tapia R."/>
            <person name="Tesmer J.G."/>
            <person name="Thayer N."/>
            <person name="Thompson L.S."/>
            <person name="Tice H."/>
            <person name="Ticknor L.O."/>
            <person name="Wills P.L."/>
            <person name="Gilna P."/>
            <person name="Brettin T.S."/>
        </authorList>
    </citation>
    <scope>NUCLEOTIDE SEQUENCE [LARGE SCALE GENOMIC DNA]</scope>
    <source>
        <strain>Al Hakam</strain>
    </source>
</reference>
<proteinExistence type="inferred from homology"/>
<keyword id="KW-0687">Ribonucleoprotein</keyword>
<keyword id="KW-0689">Ribosomal protein</keyword>
<keyword id="KW-0694">RNA-binding</keyword>
<keyword id="KW-0699">rRNA-binding</keyword>
<accession>A0R8J7</accession>
<comment type="function">
    <text evidence="1">With S4 and S12 plays an important role in translational accuracy.</text>
</comment>
<comment type="function">
    <text evidence="1">Located at the back of the 30S subunit body where it stabilizes the conformation of the head with respect to the body.</text>
</comment>
<comment type="subunit">
    <text evidence="1">Part of the 30S ribosomal subunit. Contacts proteins S4 and S8.</text>
</comment>
<comment type="domain">
    <text>The N-terminal domain interacts with the head of the 30S subunit; the C-terminal domain interacts with the body and contacts protein S4. The interaction surface between S4 and S5 is involved in control of translational fidelity.</text>
</comment>
<comment type="similarity">
    <text evidence="1">Belongs to the universal ribosomal protein uS5 family.</text>
</comment>
<name>RS5_BACAH</name>
<protein>
    <recommendedName>
        <fullName evidence="1">Small ribosomal subunit protein uS5</fullName>
    </recommendedName>
    <alternativeName>
        <fullName evidence="2">30S ribosomal protein S5</fullName>
    </alternativeName>
</protein>
<gene>
    <name evidence="1" type="primary">rpsE</name>
    <name type="ordered locus">BALH_0125</name>
</gene>
<evidence type="ECO:0000255" key="1">
    <source>
        <dbReference type="HAMAP-Rule" id="MF_01307"/>
    </source>
</evidence>
<evidence type="ECO:0000305" key="2"/>
<sequence length="167" mass="17661">MMHRIDPSKLELEERVVTINRVAKVVKGGRRFRFAALVVVGDKNGHVGFGTGKAQEVPDAIRKAIEDAKKNLIAVPLVGTTIPHTINGHFGAGEVFLKPAAEGTGVIAGGPVRAVLELAGVQDILSKSLGSNTPINMIRATVNGLSELKRAEDVAKLRGKSVEELLG</sequence>
<dbReference type="EMBL" id="CP000485">
    <property type="protein sequence ID" value="ABK83540.1"/>
    <property type="molecule type" value="Genomic_DNA"/>
</dbReference>
<dbReference type="SMR" id="A0R8J7"/>
<dbReference type="KEGG" id="btl:BALH_0125"/>
<dbReference type="HOGENOM" id="CLU_065898_2_2_9"/>
<dbReference type="GO" id="GO:0015935">
    <property type="term" value="C:small ribosomal subunit"/>
    <property type="evidence" value="ECO:0007669"/>
    <property type="project" value="InterPro"/>
</dbReference>
<dbReference type="GO" id="GO:0019843">
    <property type="term" value="F:rRNA binding"/>
    <property type="evidence" value="ECO:0007669"/>
    <property type="project" value="UniProtKB-UniRule"/>
</dbReference>
<dbReference type="GO" id="GO:0003735">
    <property type="term" value="F:structural constituent of ribosome"/>
    <property type="evidence" value="ECO:0007669"/>
    <property type="project" value="InterPro"/>
</dbReference>
<dbReference type="GO" id="GO:0006412">
    <property type="term" value="P:translation"/>
    <property type="evidence" value="ECO:0007669"/>
    <property type="project" value="UniProtKB-UniRule"/>
</dbReference>
<dbReference type="FunFam" id="3.30.160.20:FF:000001">
    <property type="entry name" value="30S ribosomal protein S5"/>
    <property type="match status" value="1"/>
</dbReference>
<dbReference type="FunFam" id="3.30.230.10:FF:000002">
    <property type="entry name" value="30S ribosomal protein S5"/>
    <property type="match status" value="1"/>
</dbReference>
<dbReference type="Gene3D" id="3.30.160.20">
    <property type="match status" value="1"/>
</dbReference>
<dbReference type="Gene3D" id="3.30.230.10">
    <property type="match status" value="1"/>
</dbReference>
<dbReference type="HAMAP" id="MF_01307_B">
    <property type="entry name" value="Ribosomal_uS5_B"/>
    <property type="match status" value="1"/>
</dbReference>
<dbReference type="InterPro" id="IPR020568">
    <property type="entry name" value="Ribosomal_Su5_D2-typ_SF"/>
</dbReference>
<dbReference type="InterPro" id="IPR000851">
    <property type="entry name" value="Ribosomal_uS5"/>
</dbReference>
<dbReference type="InterPro" id="IPR005712">
    <property type="entry name" value="Ribosomal_uS5_bac-type"/>
</dbReference>
<dbReference type="InterPro" id="IPR005324">
    <property type="entry name" value="Ribosomal_uS5_C"/>
</dbReference>
<dbReference type="InterPro" id="IPR013810">
    <property type="entry name" value="Ribosomal_uS5_N"/>
</dbReference>
<dbReference type="InterPro" id="IPR018192">
    <property type="entry name" value="Ribosomal_uS5_N_CS"/>
</dbReference>
<dbReference type="InterPro" id="IPR014721">
    <property type="entry name" value="Ribsml_uS5_D2-typ_fold_subgr"/>
</dbReference>
<dbReference type="NCBIfam" id="TIGR01021">
    <property type="entry name" value="rpsE_bact"/>
    <property type="match status" value="1"/>
</dbReference>
<dbReference type="PANTHER" id="PTHR48277">
    <property type="entry name" value="MITOCHONDRIAL RIBOSOMAL PROTEIN S5"/>
    <property type="match status" value="1"/>
</dbReference>
<dbReference type="PANTHER" id="PTHR48277:SF1">
    <property type="entry name" value="MITOCHONDRIAL RIBOSOMAL PROTEIN S5"/>
    <property type="match status" value="1"/>
</dbReference>
<dbReference type="Pfam" id="PF00333">
    <property type="entry name" value="Ribosomal_S5"/>
    <property type="match status" value="1"/>
</dbReference>
<dbReference type="Pfam" id="PF03719">
    <property type="entry name" value="Ribosomal_S5_C"/>
    <property type="match status" value="1"/>
</dbReference>
<dbReference type="SUPFAM" id="SSF54768">
    <property type="entry name" value="dsRNA-binding domain-like"/>
    <property type="match status" value="1"/>
</dbReference>
<dbReference type="SUPFAM" id="SSF54211">
    <property type="entry name" value="Ribosomal protein S5 domain 2-like"/>
    <property type="match status" value="1"/>
</dbReference>
<dbReference type="PROSITE" id="PS00585">
    <property type="entry name" value="RIBOSOMAL_S5"/>
    <property type="match status" value="1"/>
</dbReference>
<dbReference type="PROSITE" id="PS50881">
    <property type="entry name" value="S5_DSRBD"/>
    <property type="match status" value="1"/>
</dbReference>